<organism>
    <name type="scientific">Mycobacterium bovis (strain ATCC BAA-935 / AF2122/97)</name>
    <dbReference type="NCBI Taxonomy" id="233413"/>
    <lineage>
        <taxon>Bacteria</taxon>
        <taxon>Bacillati</taxon>
        <taxon>Actinomycetota</taxon>
        <taxon>Actinomycetes</taxon>
        <taxon>Mycobacteriales</taxon>
        <taxon>Mycobacteriaceae</taxon>
        <taxon>Mycobacterium</taxon>
        <taxon>Mycobacterium tuberculosis complex</taxon>
    </lineage>
</organism>
<evidence type="ECO:0000255" key="1">
    <source>
        <dbReference type="HAMAP-Rule" id="MF_00064"/>
    </source>
</evidence>
<evidence type="ECO:0000305" key="2"/>
<keyword id="KW-0067">ATP-binding</keyword>
<keyword id="KW-0547">Nucleotide-binding</keyword>
<keyword id="KW-0548">Nucleotidyltransferase</keyword>
<keyword id="KW-1185">Reference proteome</keyword>
<keyword id="KW-0808">Transferase</keyword>
<proteinExistence type="inferred from homology"/>
<feature type="chain" id="PRO_0000100668" description="Sulfate adenylyltransferase subunit 2">
    <location>
        <begin position="1"/>
        <end position="309"/>
    </location>
</feature>
<dbReference type="EC" id="2.7.7.4" evidence="1"/>
<dbReference type="EMBL" id="LT708304">
    <property type="protein sequence ID" value="SIT99919.1"/>
    <property type="status" value="ALT_INIT"/>
    <property type="molecule type" value="Genomic_DNA"/>
</dbReference>
<dbReference type="RefSeq" id="NP_854970.1">
    <property type="nucleotide sequence ID" value="NC_002945.3"/>
</dbReference>
<dbReference type="SMR" id="P65671"/>
<dbReference type="KEGG" id="mbo:BQ2027_MB1316"/>
<dbReference type="PATRIC" id="fig|233413.5.peg.1442"/>
<dbReference type="UniPathway" id="UPA00140">
    <property type="reaction ID" value="UER00204"/>
</dbReference>
<dbReference type="Proteomes" id="UP000001419">
    <property type="component" value="Chromosome"/>
</dbReference>
<dbReference type="GO" id="GO:0005524">
    <property type="term" value="F:ATP binding"/>
    <property type="evidence" value="ECO:0007669"/>
    <property type="project" value="UniProtKB-KW"/>
</dbReference>
<dbReference type="GO" id="GO:0004781">
    <property type="term" value="F:sulfate adenylyltransferase (ATP) activity"/>
    <property type="evidence" value="ECO:0007669"/>
    <property type="project" value="UniProtKB-UniRule"/>
</dbReference>
<dbReference type="GO" id="GO:0070814">
    <property type="term" value="P:hydrogen sulfide biosynthetic process"/>
    <property type="evidence" value="ECO:0007669"/>
    <property type="project" value="UniProtKB-UniRule"/>
</dbReference>
<dbReference type="GO" id="GO:0000103">
    <property type="term" value="P:sulfate assimilation"/>
    <property type="evidence" value="ECO:0007669"/>
    <property type="project" value="UniProtKB-UniRule"/>
</dbReference>
<dbReference type="FunFam" id="3.40.50.620:FF:000002">
    <property type="entry name" value="Sulfate adenylyltransferase subunit 2"/>
    <property type="match status" value="1"/>
</dbReference>
<dbReference type="Gene3D" id="3.40.50.620">
    <property type="entry name" value="HUPs"/>
    <property type="match status" value="1"/>
</dbReference>
<dbReference type="HAMAP" id="MF_00064">
    <property type="entry name" value="Sulf_adenylyltr_sub2"/>
    <property type="match status" value="1"/>
</dbReference>
<dbReference type="InterPro" id="IPR002500">
    <property type="entry name" value="PAPS_reduct_dom"/>
</dbReference>
<dbReference type="InterPro" id="IPR014729">
    <property type="entry name" value="Rossmann-like_a/b/a_fold"/>
</dbReference>
<dbReference type="InterPro" id="IPR011784">
    <property type="entry name" value="SO4_adenylTrfase_ssu"/>
</dbReference>
<dbReference type="InterPro" id="IPR050128">
    <property type="entry name" value="Sulfate_adenylyltrnsfr_sub2"/>
</dbReference>
<dbReference type="NCBIfam" id="TIGR02039">
    <property type="entry name" value="CysD"/>
    <property type="match status" value="1"/>
</dbReference>
<dbReference type="NCBIfam" id="NF003587">
    <property type="entry name" value="PRK05253.1"/>
    <property type="match status" value="1"/>
</dbReference>
<dbReference type="NCBIfam" id="NF009214">
    <property type="entry name" value="PRK12563.1"/>
    <property type="match status" value="1"/>
</dbReference>
<dbReference type="PANTHER" id="PTHR43196">
    <property type="entry name" value="SULFATE ADENYLYLTRANSFERASE SUBUNIT 2"/>
    <property type="match status" value="1"/>
</dbReference>
<dbReference type="PANTHER" id="PTHR43196:SF1">
    <property type="entry name" value="SULFATE ADENYLYLTRANSFERASE SUBUNIT 2"/>
    <property type="match status" value="1"/>
</dbReference>
<dbReference type="Pfam" id="PF01507">
    <property type="entry name" value="PAPS_reduct"/>
    <property type="match status" value="1"/>
</dbReference>
<dbReference type="PIRSF" id="PIRSF002936">
    <property type="entry name" value="CysDAde_trans"/>
    <property type="match status" value="1"/>
</dbReference>
<dbReference type="SUPFAM" id="SSF52402">
    <property type="entry name" value="Adenine nucleotide alpha hydrolases-like"/>
    <property type="match status" value="1"/>
</dbReference>
<accession>P65671</accession>
<accession>A0A1R3XXX9</accession>
<accession>Q10599</accession>
<accession>X2BHM7</accession>
<reference key="1">
    <citation type="journal article" date="2003" name="Proc. Natl. Acad. Sci. U.S.A.">
        <title>The complete genome sequence of Mycobacterium bovis.</title>
        <authorList>
            <person name="Garnier T."/>
            <person name="Eiglmeier K."/>
            <person name="Camus J.-C."/>
            <person name="Medina N."/>
            <person name="Mansoor H."/>
            <person name="Pryor M."/>
            <person name="Duthoy S."/>
            <person name="Grondin S."/>
            <person name="Lacroix C."/>
            <person name="Monsempe C."/>
            <person name="Simon S."/>
            <person name="Harris B."/>
            <person name="Atkin R."/>
            <person name="Doggett J."/>
            <person name="Mayes R."/>
            <person name="Keating L."/>
            <person name="Wheeler P.R."/>
            <person name="Parkhill J."/>
            <person name="Barrell B.G."/>
            <person name="Cole S.T."/>
            <person name="Gordon S.V."/>
            <person name="Hewinson R.G."/>
        </authorList>
    </citation>
    <scope>NUCLEOTIDE SEQUENCE [LARGE SCALE GENOMIC DNA]</scope>
    <source>
        <strain>ATCC BAA-935 / AF2122/97</strain>
    </source>
</reference>
<reference key="2">
    <citation type="journal article" date="2017" name="Genome Announc.">
        <title>Updated reference genome sequence and annotation of Mycobacterium bovis AF2122/97.</title>
        <authorList>
            <person name="Malone K.M."/>
            <person name="Farrell D."/>
            <person name="Stuber T.P."/>
            <person name="Schubert O.T."/>
            <person name="Aebersold R."/>
            <person name="Robbe-Austerman S."/>
            <person name="Gordon S.V."/>
        </authorList>
    </citation>
    <scope>NUCLEOTIDE SEQUENCE [LARGE SCALE GENOMIC DNA]</scope>
    <scope>GENOME REANNOTATION</scope>
    <source>
        <strain>ATCC BAA-935 / AF2122/97</strain>
    </source>
</reference>
<gene>
    <name evidence="1" type="primary">cysD</name>
    <name type="ordered locus">BQ2027_MB1316</name>
</gene>
<sequence>MTSDVTVGPAPGQYQLSHLRLLEAEAIHVIREVAAEFERPVLLFSGGKDSIVMLHLALKAFRPGRLPFPVMHVDTGHNFDEVIATRDELVAAAGVRLVVASVQDDIDAGRVVETIPSRNPIQTVTLLRAIRENQFDAAFGGARRDEEKARAKERVFSFRDEFGQWDPKAQRPELWNLYNGRHHKGEHIRVFPLSNWTEFDIWSYIGAEQVRLPSIYFAHRRKVFQRDGMLLAVHRHMQPRADEPVFEATVRFRTVGDVTCTGCVESSASTVAEVIAETAVARLTERGATRADDRISEAGMEDRKRQGYF</sequence>
<protein>
    <recommendedName>
        <fullName evidence="1">Sulfate adenylyltransferase subunit 2</fullName>
        <ecNumber evidence="1">2.7.7.4</ecNumber>
    </recommendedName>
    <alternativeName>
        <fullName evidence="1">ATP-sulfurylase small subunit</fullName>
    </alternativeName>
    <alternativeName>
        <fullName evidence="1">Sulfate adenylate transferase</fullName>
        <shortName evidence="1">SAT</shortName>
    </alternativeName>
</protein>
<name>CYSD_MYCBO</name>
<comment type="function">
    <text evidence="1">With CysN forms the ATP sulfurylase (ATPS) that catalyzes the adenylation of sulfate producing adenosine 5'-phosphosulfate (APS) and diphosphate, the first enzymatic step in sulfur assimilation pathway. APS synthesis involves the formation of a high-energy phosphoric-sulfuric acid anhydride bond driven by GTP hydrolysis by CysN coupled to ATP hydrolysis by CysD.</text>
</comment>
<comment type="catalytic activity">
    <reaction evidence="1">
        <text>sulfate + ATP + H(+) = adenosine 5'-phosphosulfate + diphosphate</text>
        <dbReference type="Rhea" id="RHEA:18133"/>
        <dbReference type="ChEBI" id="CHEBI:15378"/>
        <dbReference type="ChEBI" id="CHEBI:16189"/>
        <dbReference type="ChEBI" id="CHEBI:30616"/>
        <dbReference type="ChEBI" id="CHEBI:33019"/>
        <dbReference type="ChEBI" id="CHEBI:58243"/>
        <dbReference type="EC" id="2.7.7.4"/>
    </reaction>
</comment>
<comment type="pathway">
    <text evidence="1">Sulfur metabolism; hydrogen sulfide biosynthesis; sulfite from sulfate: step 1/3.</text>
</comment>
<comment type="subunit">
    <text evidence="1">Heterodimer composed of CysD, the smaller subunit, and CysN.</text>
</comment>
<comment type="similarity">
    <text evidence="1 2">Belongs to the PAPS reductase family. CysD subfamily.</text>
</comment>
<comment type="sequence caution" evidence="2">
    <conflict type="erroneous initiation">
        <sequence resource="EMBL-CDS" id="SIT99919"/>
    </conflict>
    <text>Extended N-terminus.</text>
</comment>